<comment type="function">
    <text evidence="1">Catalyzes the reversible conversion of 2-phosphoglycerate (2-PG) into phosphoenolpyruvate (PEP). It is essential for the degradation of carbohydrates via glycolysis.</text>
</comment>
<comment type="catalytic activity">
    <reaction evidence="1">
        <text>(2R)-2-phosphoglycerate = phosphoenolpyruvate + H2O</text>
        <dbReference type="Rhea" id="RHEA:10164"/>
        <dbReference type="ChEBI" id="CHEBI:15377"/>
        <dbReference type="ChEBI" id="CHEBI:58289"/>
        <dbReference type="ChEBI" id="CHEBI:58702"/>
        <dbReference type="EC" id="4.2.1.11"/>
    </reaction>
</comment>
<comment type="cofactor">
    <cofactor evidence="1">
        <name>Mg(2+)</name>
        <dbReference type="ChEBI" id="CHEBI:18420"/>
    </cofactor>
    <text evidence="1">Binds a second Mg(2+) ion via substrate during catalysis.</text>
</comment>
<comment type="pathway">
    <text evidence="1">Carbohydrate degradation; glycolysis; pyruvate from D-glyceraldehyde 3-phosphate: step 4/5.</text>
</comment>
<comment type="subunit">
    <text evidence="1">Component of the RNA degradosome, a multiprotein complex involved in RNA processing and mRNA degradation.</text>
</comment>
<comment type="subcellular location">
    <subcellularLocation>
        <location evidence="1">Cytoplasm</location>
    </subcellularLocation>
    <subcellularLocation>
        <location evidence="1">Secreted</location>
    </subcellularLocation>
    <subcellularLocation>
        <location evidence="1">Cell surface</location>
    </subcellularLocation>
    <text evidence="1">Fractions of enolase are present in both the cytoplasm and on the cell surface.</text>
</comment>
<comment type="similarity">
    <text evidence="1">Belongs to the enolase family.</text>
</comment>
<name>ENO_HAHCH</name>
<gene>
    <name evidence="1" type="primary">eno</name>
    <name type="ordered locus">HCH_01867</name>
</gene>
<evidence type="ECO:0000255" key="1">
    <source>
        <dbReference type="HAMAP-Rule" id="MF_00318"/>
    </source>
</evidence>
<reference key="1">
    <citation type="journal article" date="2005" name="Nucleic Acids Res.">
        <title>Genomic blueprint of Hahella chejuensis, a marine microbe producing an algicidal agent.</title>
        <authorList>
            <person name="Jeong H."/>
            <person name="Yim J.H."/>
            <person name="Lee C."/>
            <person name="Choi S.-H."/>
            <person name="Park Y.K."/>
            <person name="Yoon S.H."/>
            <person name="Hur C.-G."/>
            <person name="Kang H.-Y."/>
            <person name="Kim D."/>
            <person name="Lee H.H."/>
            <person name="Park K.H."/>
            <person name="Park S.-H."/>
            <person name="Park H.-S."/>
            <person name="Lee H.K."/>
            <person name="Oh T.K."/>
            <person name="Kim J.F."/>
        </authorList>
    </citation>
    <scope>NUCLEOTIDE SEQUENCE [LARGE SCALE GENOMIC DNA]</scope>
    <source>
        <strain>KCTC 2396</strain>
    </source>
</reference>
<keyword id="KW-0963">Cytoplasm</keyword>
<keyword id="KW-0324">Glycolysis</keyword>
<keyword id="KW-0456">Lyase</keyword>
<keyword id="KW-0460">Magnesium</keyword>
<keyword id="KW-0479">Metal-binding</keyword>
<keyword id="KW-1185">Reference proteome</keyword>
<keyword id="KW-0964">Secreted</keyword>
<sequence>MAEIVDVRAREVLDSRGNPTVEADVVLKSGVVGSACAPSGASTGSREALELRDKDPARYMGKGVLKAVDAVNTSIRSALIGRDAREQRELDRIMIDLDGTENKANLGANAILAVSLAAAKAAAQEKGVPLYAHIADINGTSGQYSMPVPMMNILNGGEHADNNVDIQEFMVQPVGVASFREALRVGAEIFHNLKKVLHDKGLNTAVGDEGGFAPNLPSNEAALAAIEEAVTKAGYKLGSDVTLALDCASSEFYKDGQYNLSGEGKVFSSEEFADYLGDLSQRYPIVSIEDGMDESDWDGWAALTRKLGDKVQLVGDDLFVTNTKILKQGIDKGIANSILIKFNQIGSLSETLDAIKMAKDAGFTAVISHRSGETEDTTIADLAVATSAGQIKTGSLCRSDRVAKYNRLLRIEEELAGSAPYRGLKEIKGQE</sequence>
<dbReference type="EC" id="4.2.1.11" evidence="1"/>
<dbReference type="EMBL" id="CP000155">
    <property type="protein sequence ID" value="ABC28704.1"/>
    <property type="molecule type" value="Genomic_DNA"/>
</dbReference>
<dbReference type="RefSeq" id="WP_011395776.1">
    <property type="nucleotide sequence ID" value="NC_007645.1"/>
</dbReference>
<dbReference type="SMR" id="Q2SKX0"/>
<dbReference type="STRING" id="349521.HCH_01867"/>
<dbReference type="KEGG" id="hch:HCH_01867"/>
<dbReference type="eggNOG" id="COG0148">
    <property type="taxonomic scope" value="Bacteria"/>
</dbReference>
<dbReference type="HOGENOM" id="CLU_031223_2_1_6"/>
<dbReference type="OrthoDB" id="9804716at2"/>
<dbReference type="UniPathway" id="UPA00109">
    <property type="reaction ID" value="UER00187"/>
</dbReference>
<dbReference type="Proteomes" id="UP000000238">
    <property type="component" value="Chromosome"/>
</dbReference>
<dbReference type="GO" id="GO:0009986">
    <property type="term" value="C:cell surface"/>
    <property type="evidence" value="ECO:0007669"/>
    <property type="project" value="UniProtKB-SubCell"/>
</dbReference>
<dbReference type="GO" id="GO:0005576">
    <property type="term" value="C:extracellular region"/>
    <property type="evidence" value="ECO:0007669"/>
    <property type="project" value="UniProtKB-SubCell"/>
</dbReference>
<dbReference type="GO" id="GO:0000015">
    <property type="term" value="C:phosphopyruvate hydratase complex"/>
    <property type="evidence" value="ECO:0007669"/>
    <property type="project" value="InterPro"/>
</dbReference>
<dbReference type="GO" id="GO:0000287">
    <property type="term" value="F:magnesium ion binding"/>
    <property type="evidence" value="ECO:0007669"/>
    <property type="project" value="UniProtKB-UniRule"/>
</dbReference>
<dbReference type="GO" id="GO:0004634">
    <property type="term" value="F:phosphopyruvate hydratase activity"/>
    <property type="evidence" value="ECO:0007669"/>
    <property type="project" value="UniProtKB-UniRule"/>
</dbReference>
<dbReference type="GO" id="GO:0006096">
    <property type="term" value="P:glycolytic process"/>
    <property type="evidence" value="ECO:0007669"/>
    <property type="project" value="UniProtKB-UniRule"/>
</dbReference>
<dbReference type="CDD" id="cd03313">
    <property type="entry name" value="enolase"/>
    <property type="match status" value="1"/>
</dbReference>
<dbReference type="FunFam" id="3.20.20.120:FF:000001">
    <property type="entry name" value="Enolase"/>
    <property type="match status" value="1"/>
</dbReference>
<dbReference type="FunFam" id="3.30.390.10:FF:000001">
    <property type="entry name" value="Enolase"/>
    <property type="match status" value="1"/>
</dbReference>
<dbReference type="Gene3D" id="3.20.20.120">
    <property type="entry name" value="Enolase-like C-terminal domain"/>
    <property type="match status" value="1"/>
</dbReference>
<dbReference type="Gene3D" id="3.30.390.10">
    <property type="entry name" value="Enolase-like, N-terminal domain"/>
    <property type="match status" value="1"/>
</dbReference>
<dbReference type="HAMAP" id="MF_00318">
    <property type="entry name" value="Enolase"/>
    <property type="match status" value="1"/>
</dbReference>
<dbReference type="InterPro" id="IPR000941">
    <property type="entry name" value="Enolase"/>
</dbReference>
<dbReference type="InterPro" id="IPR036849">
    <property type="entry name" value="Enolase-like_C_sf"/>
</dbReference>
<dbReference type="InterPro" id="IPR029017">
    <property type="entry name" value="Enolase-like_N"/>
</dbReference>
<dbReference type="InterPro" id="IPR020810">
    <property type="entry name" value="Enolase_C"/>
</dbReference>
<dbReference type="InterPro" id="IPR020809">
    <property type="entry name" value="Enolase_CS"/>
</dbReference>
<dbReference type="InterPro" id="IPR020811">
    <property type="entry name" value="Enolase_N"/>
</dbReference>
<dbReference type="NCBIfam" id="TIGR01060">
    <property type="entry name" value="eno"/>
    <property type="match status" value="1"/>
</dbReference>
<dbReference type="PANTHER" id="PTHR11902">
    <property type="entry name" value="ENOLASE"/>
    <property type="match status" value="1"/>
</dbReference>
<dbReference type="PANTHER" id="PTHR11902:SF1">
    <property type="entry name" value="ENOLASE"/>
    <property type="match status" value="1"/>
</dbReference>
<dbReference type="Pfam" id="PF00113">
    <property type="entry name" value="Enolase_C"/>
    <property type="match status" value="1"/>
</dbReference>
<dbReference type="Pfam" id="PF03952">
    <property type="entry name" value="Enolase_N"/>
    <property type="match status" value="1"/>
</dbReference>
<dbReference type="PIRSF" id="PIRSF001400">
    <property type="entry name" value="Enolase"/>
    <property type="match status" value="1"/>
</dbReference>
<dbReference type="PRINTS" id="PR00148">
    <property type="entry name" value="ENOLASE"/>
</dbReference>
<dbReference type="SFLD" id="SFLDS00001">
    <property type="entry name" value="Enolase"/>
    <property type="match status" value="1"/>
</dbReference>
<dbReference type="SFLD" id="SFLDF00002">
    <property type="entry name" value="enolase"/>
    <property type="match status" value="1"/>
</dbReference>
<dbReference type="SMART" id="SM01192">
    <property type="entry name" value="Enolase_C"/>
    <property type="match status" value="1"/>
</dbReference>
<dbReference type="SMART" id="SM01193">
    <property type="entry name" value="Enolase_N"/>
    <property type="match status" value="1"/>
</dbReference>
<dbReference type="SUPFAM" id="SSF51604">
    <property type="entry name" value="Enolase C-terminal domain-like"/>
    <property type="match status" value="1"/>
</dbReference>
<dbReference type="SUPFAM" id="SSF54826">
    <property type="entry name" value="Enolase N-terminal domain-like"/>
    <property type="match status" value="1"/>
</dbReference>
<dbReference type="PROSITE" id="PS00164">
    <property type="entry name" value="ENOLASE"/>
    <property type="match status" value="1"/>
</dbReference>
<feature type="chain" id="PRO_0000267043" description="Enolase">
    <location>
        <begin position="1"/>
        <end position="431"/>
    </location>
</feature>
<feature type="active site" description="Proton donor" evidence="1">
    <location>
        <position position="209"/>
    </location>
</feature>
<feature type="active site" description="Proton acceptor" evidence="1">
    <location>
        <position position="341"/>
    </location>
</feature>
<feature type="binding site" evidence="1">
    <location>
        <position position="167"/>
    </location>
    <ligand>
        <name>(2R)-2-phosphoglycerate</name>
        <dbReference type="ChEBI" id="CHEBI:58289"/>
    </ligand>
</feature>
<feature type="binding site" evidence="1">
    <location>
        <position position="246"/>
    </location>
    <ligand>
        <name>Mg(2+)</name>
        <dbReference type="ChEBI" id="CHEBI:18420"/>
    </ligand>
</feature>
<feature type="binding site" evidence="1">
    <location>
        <position position="289"/>
    </location>
    <ligand>
        <name>Mg(2+)</name>
        <dbReference type="ChEBI" id="CHEBI:18420"/>
    </ligand>
</feature>
<feature type="binding site" evidence="1">
    <location>
        <position position="316"/>
    </location>
    <ligand>
        <name>Mg(2+)</name>
        <dbReference type="ChEBI" id="CHEBI:18420"/>
    </ligand>
</feature>
<feature type="binding site" evidence="1">
    <location>
        <position position="341"/>
    </location>
    <ligand>
        <name>(2R)-2-phosphoglycerate</name>
        <dbReference type="ChEBI" id="CHEBI:58289"/>
    </ligand>
</feature>
<feature type="binding site" evidence="1">
    <location>
        <position position="370"/>
    </location>
    <ligand>
        <name>(2R)-2-phosphoglycerate</name>
        <dbReference type="ChEBI" id="CHEBI:58289"/>
    </ligand>
</feature>
<feature type="binding site" evidence="1">
    <location>
        <position position="371"/>
    </location>
    <ligand>
        <name>(2R)-2-phosphoglycerate</name>
        <dbReference type="ChEBI" id="CHEBI:58289"/>
    </ligand>
</feature>
<feature type="binding site" evidence="1">
    <location>
        <position position="392"/>
    </location>
    <ligand>
        <name>(2R)-2-phosphoglycerate</name>
        <dbReference type="ChEBI" id="CHEBI:58289"/>
    </ligand>
</feature>
<proteinExistence type="inferred from homology"/>
<organism>
    <name type="scientific">Hahella chejuensis (strain KCTC 2396)</name>
    <dbReference type="NCBI Taxonomy" id="349521"/>
    <lineage>
        <taxon>Bacteria</taxon>
        <taxon>Pseudomonadati</taxon>
        <taxon>Pseudomonadota</taxon>
        <taxon>Gammaproteobacteria</taxon>
        <taxon>Oceanospirillales</taxon>
        <taxon>Hahellaceae</taxon>
        <taxon>Hahella</taxon>
    </lineage>
</organism>
<protein>
    <recommendedName>
        <fullName evidence="1">Enolase</fullName>
        <ecNumber evidence="1">4.2.1.11</ecNumber>
    </recommendedName>
    <alternativeName>
        <fullName evidence="1">2-phospho-D-glycerate hydro-lyase</fullName>
    </alternativeName>
    <alternativeName>
        <fullName evidence="1">2-phosphoglycerate dehydratase</fullName>
    </alternativeName>
</protein>
<accession>Q2SKX0</accession>